<name>GCST_SHIF8</name>
<dbReference type="EC" id="2.1.2.10" evidence="1"/>
<dbReference type="EMBL" id="CP000266">
    <property type="protein sequence ID" value="ABF05022.1"/>
    <property type="molecule type" value="Genomic_DNA"/>
</dbReference>
<dbReference type="RefSeq" id="WP_000068744.1">
    <property type="nucleotide sequence ID" value="NC_008258.1"/>
</dbReference>
<dbReference type="SMR" id="Q0T0Z3"/>
<dbReference type="KEGG" id="sfv:SFV_2953"/>
<dbReference type="HOGENOM" id="CLU_007884_10_2_6"/>
<dbReference type="Proteomes" id="UP000000659">
    <property type="component" value="Chromosome"/>
</dbReference>
<dbReference type="GO" id="GO:0005829">
    <property type="term" value="C:cytosol"/>
    <property type="evidence" value="ECO:0007669"/>
    <property type="project" value="TreeGrafter"/>
</dbReference>
<dbReference type="GO" id="GO:0005960">
    <property type="term" value="C:glycine cleavage complex"/>
    <property type="evidence" value="ECO:0007669"/>
    <property type="project" value="InterPro"/>
</dbReference>
<dbReference type="GO" id="GO:0004047">
    <property type="term" value="F:aminomethyltransferase activity"/>
    <property type="evidence" value="ECO:0007669"/>
    <property type="project" value="UniProtKB-UniRule"/>
</dbReference>
<dbReference type="GO" id="GO:0008483">
    <property type="term" value="F:transaminase activity"/>
    <property type="evidence" value="ECO:0007669"/>
    <property type="project" value="UniProtKB-KW"/>
</dbReference>
<dbReference type="GO" id="GO:0019464">
    <property type="term" value="P:glycine decarboxylation via glycine cleavage system"/>
    <property type="evidence" value="ECO:0007669"/>
    <property type="project" value="UniProtKB-UniRule"/>
</dbReference>
<dbReference type="FunFam" id="2.40.30.110:FF:000001">
    <property type="entry name" value="Aminomethyltransferase"/>
    <property type="match status" value="1"/>
</dbReference>
<dbReference type="FunFam" id="3.30.70.1400:FF:000001">
    <property type="entry name" value="Aminomethyltransferase"/>
    <property type="match status" value="1"/>
</dbReference>
<dbReference type="FunFam" id="4.10.1250.10:FF:000001">
    <property type="entry name" value="Aminomethyltransferase"/>
    <property type="match status" value="1"/>
</dbReference>
<dbReference type="Gene3D" id="2.40.30.110">
    <property type="entry name" value="Aminomethyltransferase beta-barrel domains"/>
    <property type="match status" value="1"/>
</dbReference>
<dbReference type="Gene3D" id="3.30.70.1400">
    <property type="entry name" value="Aminomethyltransferase beta-barrel domains"/>
    <property type="match status" value="1"/>
</dbReference>
<dbReference type="Gene3D" id="4.10.1250.10">
    <property type="entry name" value="Aminomethyltransferase fragment"/>
    <property type="match status" value="1"/>
</dbReference>
<dbReference type="Gene3D" id="3.30.1360.120">
    <property type="entry name" value="Probable tRNA modification gtpase trme, domain 1"/>
    <property type="match status" value="1"/>
</dbReference>
<dbReference type="HAMAP" id="MF_00259">
    <property type="entry name" value="GcvT"/>
    <property type="match status" value="1"/>
</dbReference>
<dbReference type="InterPro" id="IPR006223">
    <property type="entry name" value="GCS_T"/>
</dbReference>
<dbReference type="InterPro" id="IPR022903">
    <property type="entry name" value="GCS_T_bac"/>
</dbReference>
<dbReference type="InterPro" id="IPR013977">
    <property type="entry name" value="GCST_C"/>
</dbReference>
<dbReference type="InterPro" id="IPR006222">
    <property type="entry name" value="GCV_T_N"/>
</dbReference>
<dbReference type="InterPro" id="IPR028896">
    <property type="entry name" value="GcvT/YgfZ/DmdA"/>
</dbReference>
<dbReference type="InterPro" id="IPR029043">
    <property type="entry name" value="GcvT/YgfZ_C"/>
</dbReference>
<dbReference type="InterPro" id="IPR027266">
    <property type="entry name" value="TrmE/GcvT_dom1"/>
</dbReference>
<dbReference type="NCBIfam" id="TIGR00528">
    <property type="entry name" value="gcvT"/>
    <property type="match status" value="1"/>
</dbReference>
<dbReference type="NCBIfam" id="NF001567">
    <property type="entry name" value="PRK00389.1"/>
    <property type="match status" value="1"/>
</dbReference>
<dbReference type="PANTHER" id="PTHR43757">
    <property type="entry name" value="AMINOMETHYLTRANSFERASE"/>
    <property type="match status" value="1"/>
</dbReference>
<dbReference type="PANTHER" id="PTHR43757:SF2">
    <property type="entry name" value="AMINOMETHYLTRANSFERASE, MITOCHONDRIAL"/>
    <property type="match status" value="1"/>
</dbReference>
<dbReference type="Pfam" id="PF01571">
    <property type="entry name" value="GCV_T"/>
    <property type="match status" value="1"/>
</dbReference>
<dbReference type="Pfam" id="PF08669">
    <property type="entry name" value="GCV_T_C"/>
    <property type="match status" value="1"/>
</dbReference>
<dbReference type="PIRSF" id="PIRSF006487">
    <property type="entry name" value="GcvT"/>
    <property type="match status" value="1"/>
</dbReference>
<dbReference type="SUPFAM" id="SSF101790">
    <property type="entry name" value="Aminomethyltransferase beta-barrel domain"/>
    <property type="match status" value="1"/>
</dbReference>
<dbReference type="SUPFAM" id="SSF103025">
    <property type="entry name" value="Folate-binding domain"/>
    <property type="match status" value="1"/>
</dbReference>
<accession>Q0T0Z3</accession>
<feature type="chain" id="PRO_1000047710" description="Aminomethyltransferase">
    <location>
        <begin position="1"/>
        <end position="364"/>
    </location>
</feature>
<reference key="1">
    <citation type="journal article" date="2006" name="BMC Genomics">
        <title>Complete genome sequence of Shigella flexneri 5b and comparison with Shigella flexneri 2a.</title>
        <authorList>
            <person name="Nie H."/>
            <person name="Yang F."/>
            <person name="Zhang X."/>
            <person name="Yang J."/>
            <person name="Chen L."/>
            <person name="Wang J."/>
            <person name="Xiong Z."/>
            <person name="Peng J."/>
            <person name="Sun L."/>
            <person name="Dong J."/>
            <person name="Xue Y."/>
            <person name="Xu X."/>
            <person name="Chen S."/>
            <person name="Yao Z."/>
            <person name="Shen Y."/>
            <person name="Jin Q."/>
        </authorList>
    </citation>
    <scope>NUCLEOTIDE SEQUENCE [LARGE SCALE GENOMIC DNA]</scope>
    <source>
        <strain>8401</strain>
    </source>
</reference>
<protein>
    <recommendedName>
        <fullName evidence="1">Aminomethyltransferase</fullName>
        <ecNumber evidence="1">2.1.2.10</ecNumber>
    </recommendedName>
    <alternativeName>
        <fullName evidence="1">Glycine cleavage system T protein</fullName>
    </alternativeName>
</protein>
<sequence length="364" mass="40263">MAQQTPLYEQHTLCGARMVDFHSWMMPLHYGSQIDEHHAVRTDAGMFDVSHMTIVDLRGSRTREFLRYLLANDVAKLTKSGKALYSGMLNASGGVIDDLIVYYFTEDFFRLVVNSATREKDLSWITQHAEPFGIEITVRDDLSMIAVQGPNAQAKAATLFNDAQRQVVEGMKPFFGVQVGDLFIATTGYTGEAGYEIALPNEKAADFWRALVEAGVKPCGLGARDTLRLEAGMNLYGQEMDETISPLAANMGWTIAWEPTDRDFIGREALEVQREHGTEKLVGLVMTEKGVLRNELPVRFTDAQGNQHEGIITSGTFSPTLGYSIALARVPEGIGETAIVQIRNREMPVKVTKPVFVRNGKAVA</sequence>
<comment type="function">
    <text evidence="1">The glycine cleavage system catalyzes the degradation of glycine.</text>
</comment>
<comment type="catalytic activity">
    <reaction evidence="1">
        <text>N(6)-[(R)-S(8)-aminomethyldihydrolipoyl]-L-lysyl-[protein] + (6S)-5,6,7,8-tetrahydrofolate = N(6)-[(R)-dihydrolipoyl]-L-lysyl-[protein] + (6R)-5,10-methylene-5,6,7,8-tetrahydrofolate + NH4(+)</text>
        <dbReference type="Rhea" id="RHEA:16945"/>
        <dbReference type="Rhea" id="RHEA-COMP:10475"/>
        <dbReference type="Rhea" id="RHEA-COMP:10492"/>
        <dbReference type="ChEBI" id="CHEBI:15636"/>
        <dbReference type="ChEBI" id="CHEBI:28938"/>
        <dbReference type="ChEBI" id="CHEBI:57453"/>
        <dbReference type="ChEBI" id="CHEBI:83100"/>
        <dbReference type="ChEBI" id="CHEBI:83143"/>
        <dbReference type="EC" id="2.1.2.10"/>
    </reaction>
</comment>
<comment type="subunit">
    <text evidence="1">The glycine cleavage system is composed of four proteins: P, T, L and H.</text>
</comment>
<comment type="similarity">
    <text evidence="1">Belongs to the GcvT family.</text>
</comment>
<evidence type="ECO:0000255" key="1">
    <source>
        <dbReference type="HAMAP-Rule" id="MF_00259"/>
    </source>
</evidence>
<gene>
    <name evidence="1" type="primary">gcvT</name>
    <name type="ordered locus">SFV_2953</name>
</gene>
<proteinExistence type="inferred from homology"/>
<keyword id="KW-0032">Aminotransferase</keyword>
<keyword id="KW-0808">Transferase</keyword>
<organism>
    <name type="scientific">Shigella flexneri serotype 5b (strain 8401)</name>
    <dbReference type="NCBI Taxonomy" id="373384"/>
    <lineage>
        <taxon>Bacteria</taxon>
        <taxon>Pseudomonadati</taxon>
        <taxon>Pseudomonadota</taxon>
        <taxon>Gammaproteobacteria</taxon>
        <taxon>Enterobacterales</taxon>
        <taxon>Enterobacteriaceae</taxon>
        <taxon>Shigella</taxon>
    </lineage>
</organism>